<dbReference type="EC" id="6.2.1.5" evidence="1"/>
<dbReference type="EMBL" id="AM884176">
    <property type="protein sequence ID" value="CAP03637.1"/>
    <property type="molecule type" value="Genomic_DNA"/>
</dbReference>
<dbReference type="RefSeq" id="WP_009873433.1">
    <property type="nucleotide sequence ID" value="NC_010287.1"/>
</dbReference>
<dbReference type="RefSeq" id="YP_001654283.1">
    <property type="nucleotide sequence ID" value="NC_010287.1"/>
</dbReference>
<dbReference type="SMR" id="B0B950"/>
<dbReference type="KEGG" id="ctb:CTL0193"/>
<dbReference type="PATRIC" id="fig|471472.4.peg.209"/>
<dbReference type="HOGENOM" id="CLU_037430_0_2_0"/>
<dbReference type="UniPathway" id="UPA00223">
    <property type="reaction ID" value="UER00999"/>
</dbReference>
<dbReference type="Proteomes" id="UP001154402">
    <property type="component" value="Chromosome"/>
</dbReference>
<dbReference type="GO" id="GO:0005829">
    <property type="term" value="C:cytosol"/>
    <property type="evidence" value="ECO:0007669"/>
    <property type="project" value="TreeGrafter"/>
</dbReference>
<dbReference type="GO" id="GO:0042709">
    <property type="term" value="C:succinate-CoA ligase complex"/>
    <property type="evidence" value="ECO:0007669"/>
    <property type="project" value="TreeGrafter"/>
</dbReference>
<dbReference type="GO" id="GO:0005524">
    <property type="term" value="F:ATP binding"/>
    <property type="evidence" value="ECO:0007669"/>
    <property type="project" value="UniProtKB-UniRule"/>
</dbReference>
<dbReference type="GO" id="GO:0000287">
    <property type="term" value="F:magnesium ion binding"/>
    <property type="evidence" value="ECO:0007669"/>
    <property type="project" value="UniProtKB-UniRule"/>
</dbReference>
<dbReference type="GO" id="GO:0004775">
    <property type="term" value="F:succinate-CoA ligase (ADP-forming) activity"/>
    <property type="evidence" value="ECO:0007669"/>
    <property type="project" value="UniProtKB-UniRule"/>
</dbReference>
<dbReference type="GO" id="GO:0004776">
    <property type="term" value="F:succinate-CoA ligase (GDP-forming) activity"/>
    <property type="evidence" value="ECO:0007669"/>
    <property type="project" value="RHEA"/>
</dbReference>
<dbReference type="GO" id="GO:0006104">
    <property type="term" value="P:succinyl-CoA metabolic process"/>
    <property type="evidence" value="ECO:0007669"/>
    <property type="project" value="TreeGrafter"/>
</dbReference>
<dbReference type="GO" id="GO:0006099">
    <property type="term" value="P:tricarboxylic acid cycle"/>
    <property type="evidence" value="ECO:0007669"/>
    <property type="project" value="UniProtKB-UniRule"/>
</dbReference>
<dbReference type="FunFam" id="3.30.470.20:FF:000002">
    <property type="entry name" value="Succinate--CoA ligase [ADP-forming] subunit beta"/>
    <property type="match status" value="1"/>
</dbReference>
<dbReference type="FunFam" id="3.40.50.261:FF:000019">
    <property type="entry name" value="Succinate--CoA ligase [ADP-forming] subunit beta"/>
    <property type="match status" value="1"/>
</dbReference>
<dbReference type="Gene3D" id="3.30.1490.20">
    <property type="entry name" value="ATP-grasp fold, A domain"/>
    <property type="match status" value="1"/>
</dbReference>
<dbReference type="Gene3D" id="3.30.470.20">
    <property type="entry name" value="ATP-grasp fold, B domain"/>
    <property type="match status" value="1"/>
</dbReference>
<dbReference type="Gene3D" id="3.40.50.261">
    <property type="entry name" value="Succinyl-CoA synthetase domains"/>
    <property type="match status" value="1"/>
</dbReference>
<dbReference type="HAMAP" id="MF_00558">
    <property type="entry name" value="Succ_CoA_beta"/>
    <property type="match status" value="1"/>
</dbReference>
<dbReference type="InterPro" id="IPR011761">
    <property type="entry name" value="ATP-grasp"/>
</dbReference>
<dbReference type="InterPro" id="IPR013650">
    <property type="entry name" value="ATP-grasp_succ-CoA_synth-type"/>
</dbReference>
<dbReference type="InterPro" id="IPR013815">
    <property type="entry name" value="ATP_grasp_subdomain_1"/>
</dbReference>
<dbReference type="InterPro" id="IPR017866">
    <property type="entry name" value="Succ-CoA_synthase_bsu_CS"/>
</dbReference>
<dbReference type="InterPro" id="IPR005811">
    <property type="entry name" value="SUCC_ACL_C"/>
</dbReference>
<dbReference type="InterPro" id="IPR005809">
    <property type="entry name" value="Succ_CoA_ligase-like_bsu"/>
</dbReference>
<dbReference type="InterPro" id="IPR016102">
    <property type="entry name" value="Succinyl-CoA_synth-like"/>
</dbReference>
<dbReference type="NCBIfam" id="NF001913">
    <property type="entry name" value="PRK00696.1"/>
    <property type="match status" value="1"/>
</dbReference>
<dbReference type="NCBIfam" id="TIGR01016">
    <property type="entry name" value="sucCoAbeta"/>
    <property type="match status" value="1"/>
</dbReference>
<dbReference type="PANTHER" id="PTHR11815:SF10">
    <property type="entry name" value="SUCCINATE--COA LIGASE [GDP-FORMING] SUBUNIT BETA, MITOCHONDRIAL"/>
    <property type="match status" value="1"/>
</dbReference>
<dbReference type="PANTHER" id="PTHR11815">
    <property type="entry name" value="SUCCINYL-COA SYNTHETASE BETA CHAIN"/>
    <property type="match status" value="1"/>
</dbReference>
<dbReference type="Pfam" id="PF08442">
    <property type="entry name" value="ATP-grasp_2"/>
    <property type="match status" value="1"/>
</dbReference>
<dbReference type="Pfam" id="PF00549">
    <property type="entry name" value="Ligase_CoA"/>
    <property type="match status" value="1"/>
</dbReference>
<dbReference type="PIRSF" id="PIRSF001554">
    <property type="entry name" value="SucCS_beta"/>
    <property type="match status" value="1"/>
</dbReference>
<dbReference type="SUPFAM" id="SSF56059">
    <property type="entry name" value="Glutathione synthetase ATP-binding domain-like"/>
    <property type="match status" value="1"/>
</dbReference>
<dbReference type="SUPFAM" id="SSF52210">
    <property type="entry name" value="Succinyl-CoA synthetase domains"/>
    <property type="match status" value="1"/>
</dbReference>
<dbReference type="PROSITE" id="PS50975">
    <property type="entry name" value="ATP_GRASP"/>
    <property type="match status" value="1"/>
</dbReference>
<dbReference type="PROSITE" id="PS01217">
    <property type="entry name" value="SUCCINYL_COA_LIG_3"/>
    <property type="match status" value="1"/>
</dbReference>
<name>SUCC_CHLT2</name>
<proteinExistence type="inferred from homology"/>
<reference key="1">
    <citation type="journal article" date="2008" name="Genome Res.">
        <title>Chlamydia trachomatis: genome sequence analysis of lymphogranuloma venereum isolates.</title>
        <authorList>
            <person name="Thomson N.R."/>
            <person name="Holden M.T.G."/>
            <person name="Carder C."/>
            <person name="Lennard N."/>
            <person name="Lockey S.J."/>
            <person name="Marsh P."/>
            <person name="Skipp P."/>
            <person name="O'Connor C.D."/>
            <person name="Goodhead I."/>
            <person name="Norbertzcak H."/>
            <person name="Harris B."/>
            <person name="Ormond D."/>
            <person name="Rance R."/>
            <person name="Quail M.A."/>
            <person name="Parkhill J."/>
            <person name="Stephens R.S."/>
            <person name="Clarke I.N."/>
        </authorList>
    </citation>
    <scope>NUCLEOTIDE SEQUENCE [LARGE SCALE GENOMIC DNA]</scope>
    <source>
        <strain>ATCC VR-902B / DSM 19102 / 434/Bu</strain>
    </source>
</reference>
<comment type="function">
    <text evidence="1">Succinyl-CoA synthetase functions in the citric acid cycle (TCA), coupling the hydrolysis of succinyl-CoA to the synthesis of either ATP or GTP and thus represents the only step of substrate-level phosphorylation in the TCA. The beta subunit provides nucleotide specificity of the enzyme and binds the substrate succinate, while the binding sites for coenzyme A and phosphate are found in the alpha subunit.</text>
</comment>
<comment type="catalytic activity">
    <reaction evidence="1">
        <text>succinate + ATP + CoA = succinyl-CoA + ADP + phosphate</text>
        <dbReference type="Rhea" id="RHEA:17661"/>
        <dbReference type="ChEBI" id="CHEBI:30031"/>
        <dbReference type="ChEBI" id="CHEBI:30616"/>
        <dbReference type="ChEBI" id="CHEBI:43474"/>
        <dbReference type="ChEBI" id="CHEBI:57287"/>
        <dbReference type="ChEBI" id="CHEBI:57292"/>
        <dbReference type="ChEBI" id="CHEBI:456216"/>
        <dbReference type="EC" id="6.2.1.5"/>
    </reaction>
    <physiologicalReaction direction="right-to-left" evidence="1">
        <dbReference type="Rhea" id="RHEA:17663"/>
    </physiologicalReaction>
</comment>
<comment type="catalytic activity">
    <reaction evidence="1">
        <text>GTP + succinate + CoA = succinyl-CoA + GDP + phosphate</text>
        <dbReference type="Rhea" id="RHEA:22120"/>
        <dbReference type="ChEBI" id="CHEBI:30031"/>
        <dbReference type="ChEBI" id="CHEBI:37565"/>
        <dbReference type="ChEBI" id="CHEBI:43474"/>
        <dbReference type="ChEBI" id="CHEBI:57287"/>
        <dbReference type="ChEBI" id="CHEBI:57292"/>
        <dbReference type="ChEBI" id="CHEBI:58189"/>
    </reaction>
    <physiologicalReaction direction="right-to-left" evidence="1">
        <dbReference type="Rhea" id="RHEA:22122"/>
    </physiologicalReaction>
</comment>
<comment type="cofactor">
    <cofactor evidence="1">
        <name>Mg(2+)</name>
        <dbReference type="ChEBI" id="CHEBI:18420"/>
    </cofactor>
    <text evidence="1">Binds 1 Mg(2+) ion per subunit.</text>
</comment>
<comment type="pathway">
    <text evidence="1">Carbohydrate metabolism; tricarboxylic acid cycle; succinate from succinyl-CoA (ligase route): step 1/1.</text>
</comment>
<comment type="subunit">
    <text evidence="1">Heterotetramer of two alpha and two beta subunits.</text>
</comment>
<comment type="similarity">
    <text evidence="1">Belongs to the succinate/malate CoA ligase beta subunit family.</text>
</comment>
<organism>
    <name type="scientific">Chlamydia trachomatis serovar L2 (strain ATCC VR-902B / DSM 19102 / 434/Bu)</name>
    <dbReference type="NCBI Taxonomy" id="471472"/>
    <lineage>
        <taxon>Bacteria</taxon>
        <taxon>Pseudomonadati</taxon>
        <taxon>Chlamydiota</taxon>
        <taxon>Chlamydiia</taxon>
        <taxon>Chlamydiales</taxon>
        <taxon>Chlamydiaceae</taxon>
        <taxon>Chlamydia/Chlamydophila group</taxon>
        <taxon>Chlamydia</taxon>
    </lineage>
</organism>
<protein>
    <recommendedName>
        <fullName evidence="1">Succinate--CoA ligase [ADP-forming] subunit beta</fullName>
        <ecNumber evidence="1">6.2.1.5</ecNumber>
    </recommendedName>
    <alternativeName>
        <fullName evidence="1">Succinyl-CoA synthetase subunit beta</fullName>
        <shortName evidence="1">SCS-beta</shortName>
    </alternativeName>
</protein>
<accession>B0B950</accession>
<evidence type="ECO:0000255" key="1">
    <source>
        <dbReference type="HAMAP-Rule" id="MF_00558"/>
    </source>
</evidence>
<sequence length="386" mass="41762">MHLHEYQAKDLLTAYQLPIPPYHVATSVPEVEAAIQAEQWKAGVVKAQVHAGGRGKNGGVVIAHSPEDLLAAADKLLHMQFSSNQTAGLSLPVNKVLISPLVEIASEYYLAIVIDRKHRCPVIMLSKAGGVDIEEVAEKQPDQLLKMTLPSSGKIYGYQLRRIAKFMEWDQPIADQGNRIIRQLLQCFYEKDASLLEINPLVLTKDGSLVILDAKMTIDDNALYRHPELADCYDPSQENIRDVLAKQLGLSYIALDGTIGCLVNGAGLAMSTLDILKLYGGSAANFLDVGGSASEKQIQEAISLVLSDKSVRVLFIHIFGGIMDCAVVASGLVSAMQGQKETIPTVIRLEGTNVDKGKGMIINAGIPCEFVTSMSEGAELAVQLSR</sequence>
<feature type="chain" id="PRO_1000129173" description="Succinate--CoA ligase [ADP-forming] subunit beta">
    <location>
        <begin position="1"/>
        <end position="386"/>
    </location>
</feature>
<feature type="domain" description="ATP-grasp" evidence="1">
    <location>
        <begin position="9"/>
        <end position="244"/>
    </location>
</feature>
<feature type="binding site" evidence="1">
    <location>
        <position position="46"/>
    </location>
    <ligand>
        <name>ATP</name>
        <dbReference type="ChEBI" id="CHEBI:30616"/>
    </ligand>
</feature>
<feature type="binding site" evidence="1">
    <location>
        <begin position="53"/>
        <end position="55"/>
    </location>
    <ligand>
        <name>ATP</name>
        <dbReference type="ChEBI" id="CHEBI:30616"/>
    </ligand>
</feature>
<feature type="binding site" evidence="1">
    <location>
        <position position="102"/>
    </location>
    <ligand>
        <name>ATP</name>
        <dbReference type="ChEBI" id="CHEBI:30616"/>
    </ligand>
</feature>
<feature type="binding site" evidence="1">
    <location>
        <position position="107"/>
    </location>
    <ligand>
        <name>ATP</name>
        <dbReference type="ChEBI" id="CHEBI:30616"/>
    </ligand>
</feature>
<feature type="binding site" evidence="1">
    <location>
        <position position="199"/>
    </location>
    <ligand>
        <name>Mg(2+)</name>
        <dbReference type="ChEBI" id="CHEBI:18420"/>
    </ligand>
</feature>
<feature type="binding site" evidence="1">
    <location>
        <position position="213"/>
    </location>
    <ligand>
        <name>Mg(2+)</name>
        <dbReference type="ChEBI" id="CHEBI:18420"/>
    </ligand>
</feature>
<feature type="binding site" evidence="1">
    <location>
        <position position="264"/>
    </location>
    <ligand>
        <name>substrate</name>
        <note>ligand shared with subunit alpha</note>
    </ligand>
</feature>
<feature type="binding site" evidence="1">
    <location>
        <begin position="321"/>
        <end position="323"/>
    </location>
    <ligand>
        <name>substrate</name>
        <note>ligand shared with subunit alpha</note>
    </ligand>
</feature>
<gene>
    <name evidence="1" type="primary">sucC</name>
    <name type="ordered locus">CTL0193</name>
</gene>
<keyword id="KW-0067">ATP-binding</keyword>
<keyword id="KW-0436">Ligase</keyword>
<keyword id="KW-0460">Magnesium</keyword>
<keyword id="KW-0479">Metal-binding</keyword>
<keyword id="KW-0547">Nucleotide-binding</keyword>
<keyword id="KW-0816">Tricarboxylic acid cycle</keyword>